<comment type="function">
    <text evidence="1">Catalyzes the reduction of hydroxylamine to form NH(3) and H(2)O.</text>
</comment>
<comment type="catalytic activity">
    <reaction evidence="1">
        <text>A + NH4(+) + H2O = hydroxylamine + AH2 + H(+)</text>
        <dbReference type="Rhea" id="RHEA:22052"/>
        <dbReference type="ChEBI" id="CHEBI:13193"/>
        <dbReference type="ChEBI" id="CHEBI:15377"/>
        <dbReference type="ChEBI" id="CHEBI:15378"/>
        <dbReference type="ChEBI" id="CHEBI:15429"/>
        <dbReference type="ChEBI" id="CHEBI:17499"/>
        <dbReference type="ChEBI" id="CHEBI:28938"/>
        <dbReference type="EC" id="1.7.99.1"/>
    </reaction>
</comment>
<comment type="cofactor">
    <cofactor evidence="1">
        <name>[4Fe-4S] cluster</name>
        <dbReference type="ChEBI" id="CHEBI:49883"/>
    </cofactor>
    <text evidence="1">Binds 1 [4Fe-4S] cluster.</text>
</comment>
<comment type="cofactor">
    <cofactor evidence="1">
        <name>hybrid [4Fe-2O-2S] cluster</name>
        <dbReference type="ChEBI" id="CHEBI:60519"/>
    </cofactor>
    <text evidence="1">Binds 1 hybrid [4Fe-2O-2S] cluster.</text>
</comment>
<comment type="subcellular location">
    <subcellularLocation>
        <location evidence="1">Cytoplasm</location>
    </subcellularLocation>
</comment>
<comment type="similarity">
    <text evidence="1">Belongs to the HCP family.</text>
</comment>
<gene>
    <name evidence="1" type="primary">hcp</name>
    <name type="ordered locus">Acry_1798</name>
</gene>
<name>HCP_ACICJ</name>
<keyword id="KW-0004">4Fe-4S</keyword>
<keyword id="KW-0963">Cytoplasm</keyword>
<keyword id="KW-0408">Iron</keyword>
<keyword id="KW-0411">Iron-sulfur</keyword>
<keyword id="KW-0479">Metal-binding</keyword>
<keyword id="KW-0560">Oxidoreductase</keyword>
<keyword id="KW-1185">Reference proteome</keyword>
<feature type="chain" id="PRO_1000009138" description="Hydroxylamine reductase">
    <location>
        <begin position="1"/>
        <end position="557"/>
    </location>
</feature>
<feature type="binding site" evidence="1">
    <location>
        <position position="3"/>
    </location>
    <ligand>
        <name>[4Fe-4S] cluster</name>
        <dbReference type="ChEBI" id="CHEBI:49883"/>
    </ligand>
</feature>
<feature type="binding site" evidence="1">
    <location>
        <position position="6"/>
    </location>
    <ligand>
        <name>[4Fe-4S] cluster</name>
        <dbReference type="ChEBI" id="CHEBI:49883"/>
    </ligand>
</feature>
<feature type="binding site" evidence="1">
    <location>
        <position position="19"/>
    </location>
    <ligand>
        <name>[4Fe-4S] cluster</name>
        <dbReference type="ChEBI" id="CHEBI:49883"/>
    </ligand>
</feature>
<feature type="binding site" evidence="1">
    <location>
        <position position="26"/>
    </location>
    <ligand>
        <name>[4Fe-4S] cluster</name>
        <dbReference type="ChEBI" id="CHEBI:49883"/>
    </ligand>
</feature>
<feature type="binding site" evidence="1">
    <location>
        <position position="253"/>
    </location>
    <ligand>
        <name>hybrid [4Fe-2O-2S] cluster</name>
        <dbReference type="ChEBI" id="CHEBI:60519"/>
    </ligand>
</feature>
<feature type="binding site" evidence="1">
    <location>
        <position position="277"/>
    </location>
    <ligand>
        <name>hybrid [4Fe-2O-2S] cluster</name>
        <dbReference type="ChEBI" id="CHEBI:60519"/>
    </ligand>
</feature>
<feature type="binding site" evidence="1">
    <location>
        <position position="321"/>
    </location>
    <ligand>
        <name>hybrid [4Fe-2O-2S] cluster</name>
        <dbReference type="ChEBI" id="CHEBI:60519"/>
    </ligand>
</feature>
<feature type="binding site" description="via persulfide group" evidence="1">
    <location>
        <position position="408"/>
    </location>
    <ligand>
        <name>hybrid [4Fe-2O-2S] cluster</name>
        <dbReference type="ChEBI" id="CHEBI:60519"/>
    </ligand>
</feature>
<feature type="binding site" evidence="1">
    <location>
        <position position="436"/>
    </location>
    <ligand>
        <name>hybrid [4Fe-2O-2S] cluster</name>
        <dbReference type="ChEBI" id="CHEBI:60519"/>
    </ligand>
</feature>
<feature type="binding site" evidence="1">
    <location>
        <position position="461"/>
    </location>
    <ligand>
        <name>hybrid [4Fe-2O-2S] cluster</name>
        <dbReference type="ChEBI" id="CHEBI:60519"/>
    </ligand>
</feature>
<feature type="binding site" evidence="1">
    <location>
        <position position="495"/>
    </location>
    <ligand>
        <name>hybrid [4Fe-2O-2S] cluster</name>
        <dbReference type="ChEBI" id="CHEBI:60519"/>
    </ligand>
</feature>
<feature type="binding site" evidence="1">
    <location>
        <position position="497"/>
    </location>
    <ligand>
        <name>hybrid [4Fe-2O-2S] cluster</name>
        <dbReference type="ChEBI" id="CHEBI:60519"/>
    </ligand>
</feature>
<feature type="modified residue" description="Cysteine persulfide" evidence="1">
    <location>
        <position position="408"/>
    </location>
</feature>
<accession>A5FZG9</accession>
<reference key="1">
    <citation type="submission" date="2007-05" db="EMBL/GenBank/DDBJ databases">
        <title>Complete sequence of chromosome of Acidiphilium cryptum JF-5.</title>
        <authorList>
            <consortium name="US DOE Joint Genome Institute"/>
            <person name="Copeland A."/>
            <person name="Lucas S."/>
            <person name="Lapidus A."/>
            <person name="Barry K."/>
            <person name="Detter J.C."/>
            <person name="Glavina del Rio T."/>
            <person name="Hammon N."/>
            <person name="Israni S."/>
            <person name="Dalin E."/>
            <person name="Tice H."/>
            <person name="Pitluck S."/>
            <person name="Sims D."/>
            <person name="Brettin T."/>
            <person name="Bruce D."/>
            <person name="Han C."/>
            <person name="Schmutz J."/>
            <person name="Larimer F."/>
            <person name="Land M."/>
            <person name="Hauser L."/>
            <person name="Kyrpides N."/>
            <person name="Kim E."/>
            <person name="Magnuson T."/>
            <person name="Richardson P."/>
        </authorList>
    </citation>
    <scope>NUCLEOTIDE SEQUENCE [LARGE SCALE GENOMIC DNA]</scope>
    <source>
        <strain>JF-5</strain>
    </source>
</reference>
<organism>
    <name type="scientific">Acidiphilium cryptum (strain JF-5)</name>
    <dbReference type="NCBI Taxonomy" id="349163"/>
    <lineage>
        <taxon>Bacteria</taxon>
        <taxon>Pseudomonadati</taxon>
        <taxon>Pseudomonadota</taxon>
        <taxon>Alphaproteobacteria</taxon>
        <taxon>Acetobacterales</taxon>
        <taxon>Acidocellaceae</taxon>
        <taxon>Acidiphilium</taxon>
    </lineage>
</organism>
<sequence>MFCFQCEQTMRSETGAAGCGGPKGVCGKDEATADLQDVLIHQLKGIGQYVTRLQALGRRDAEADSFILYALFTTLTNVNFNRARFVEMIATAARLRDRLRDAYAEAASEAGQTPEALGGAAAFIPADSLVGLLAQANVASVRAGAEAVGEDVIGMRALLLYGLKGVAAYAHHAEVLGETREAIADGVARVLDLLAGDPVDLELMLEEALALGRVNFTVMEALDAANTGTYGAPTPTPVRITPVEGKAILVSGHDLRDLHAILEATKDTGINVYTHGEMLPAHGYPKLHAYSHLAGNYGTAWQNQQTEFAAFPGPIVMTSNCLIEPQPLYRNRIFTAGPVGWPGLRHIADGDFSPVVQAAKALPGFTRTEPERTVTTGFGREAVLGAAEQVIGAVKAGAIRHFFLIGGCDGAAPGRNYYTEFAEQAPDDTVVLTLGCGKYRFNTHEFGTIGGLPRMLDIGQCNDAYSALVIAQALAGAFECGVNDLPLSLVVSWFEQKAAAVFLTLLALGVRNVRLGPTLPGFLTPALLDILVNRFGVRPITSAEADIADALAPKAAA</sequence>
<protein>
    <recommendedName>
        <fullName evidence="1">Hydroxylamine reductase</fullName>
        <ecNumber evidence="1">1.7.99.1</ecNumber>
    </recommendedName>
    <alternativeName>
        <fullName evidence="1">Hybrid-cluster protein</fullName>
        <shortName evidence="1">HCP</shortName>
    </alternativeName>
    <alternativeName>
        <fullName evidence="1">Prismane protein</fullName>
    </alternativeName>
</protein>
<evidence type="ECO:0000255" key="1">
    <source>
        <dbReference type="HAMAP-Rule" id="MF_00069"/>
    </source>
</evidence>
<proteinExistence type="inferred from homology"/>
<dbReference type="EC" id="1.7.99.1" evidence="1"/>
<dbReference type="EMBL" id="CP000697">
    <property type="protein sequence ID" value="ABQ31001.1"/>
    <property type="molecule type" value="Genomic_DNA"/>
</dbReference>
<dbReference type="RefSeq" id="WP_011942497.1">
    <property type="nucleotide sequence ID" value="NC_009484.1"/>
</dbReference>
<dbReference type="SMR" id="A5FZG9"/>
<dbReference type="STRING" id="349163.Acry_1798"/>
<dbReference type="KEGG" id="acr:Acry_1798"/>
<dbReference type="eggNOG" id="COG1151">
    <property type="taxonomic scope" value="Bacteria"/>
</dbReference>
<dbReference type="HOGENOM" id="CLU_038344_2_0_5"/>
<dbReference type="Proteomes" id="UP000000245">
    <property type="component" value="Chromosome"/>
</dbReference>
<dbReference type="GO" id="GO:0005737">
    <property type="term" value="C:cytoplasm"/>
    <property type="evidence" value="ECO:0007669"/>
    <property type="project" value="UniProtKB-SubCell"/>
</dbReference>
<dbReference type="GO" id="GO:0051539">
    <property type="term" value="F:4 iron, 4 sulfur cluster binding"/>
    <property type="evidence" value="ECO:0007669"/>
    <property type="project" value="UniProtKB-KW"/>
</dbReference>
<dbReference type="GO" id="GO:0050418">
    <property type="term" value="F:hydroxylamine reductase activity"/>
    <property type="evidence" value="ECO:0007669"/>
    <property type="project" value="UniProtKB-UniRule"/>
</dbReference>
<dbReference type="GO" id="GO:0046872">
    <property type="term" value="F:metal ion binding"/>
    <property type="evidence" value="ECO:0007669"/>
    <property type="project" value="UniProtKB-KW"/>
</dbReference>
<dbReference type="GO" id="GO:0004601">
    <property type="term" value="F:peroxidase activity"/>
    <property type="evidence" value="ECO:0007669"/>
    <property type="project" value="TreeGrafter"/>
</dbReference>
<dbReference type="GO" id="GO:0042542">
    <property type="term" value="P:response to hydrogen peroxide"/>
    <property type="evidence" value="ECO:0007669"/>
    <property type="project" value="TreeGrafter"/>
</dbReference>
<dbReference type="CDD" id="cd01914">
    <property type="entry name" value="HCP"/>
    <property type="match status" value="1"/>
</dbReference>
<dbReference type="FunFam" id="3.40.50.2030:FF:000001">
    <property type="entry name" value="Hydroxylamine reductase"/>
    <property type="match status" value="1"/>
</dbReference>
<dbReference type="FunFam" id="3.40.50.2030:FF:000002">
    <property type="entry name" value="Hydroxylamine reductase"/>
    <property type="match status" value="1"/>
</dbReference>
<dbReference type="Gene3D" id="1.20.1270.20">
    <property type="match status" value="2"/>
</dbReference>
<dbReference type="Gene3D" id="3.40.50.2030">
    <property type="match status" value="2"/>
</dbReference>
<dbReference type="HAMAP" id="MF_00069">
    <property type="entry name" value="Hydroxylam_reduct"/>
    <property type="match status" value="1"/>
</dbReference>
<dbReference type="InterPro" id="IPR004137">
    <property type="entry name" value="HCP/CODH"/>
</dbReference>
<dbReference type="InterPro" id="IPR010048">
    <property type="entry name" value="Hydroxylam_reduct"/>
</dbReference>
<dbReference type="InterPro" id="IPR016099">
    <property type="entry name" value="Prismane-like_a/b-sand"/>
</dbReference>
<dbReference type="InterPro" id="IPR011254">
    <property type="entry name" value="Prismane-like_sf"/>
</dbReference>
<dbReference type="InterPro" id="IPR016100">
    <property type="entry name" value="Prismane_a-bundle"/>
</dbReference>
<dbReference type="NCBIfam" id="TIGR01703">
    <property type="entry name" value="hybrid_clust"/>
    <property type="match status" value="1"/>
</dbReference>
<dbReference type="NCBIfam" id="NF003658">
    <property type="entry name" value="PRK05290.1"/>
    <property type="match status" value="1"/>
</dbReference>
<dbReference type="PANTHER" id="PTHR30109">
    <property type="entry name" value="HYDROXYLAMINE REDUCTASE"/>
    <property type="match status" value="1"/>
</dbReference>
<dbReference type="PANTHER" id="PTHR30109:SF0">
    <property type="entry name" value="HYDROXYLAMINE REDUCTASE"/>
    <property type="match status" value="1"/>
</dbReference>
<dbReference type="Pfam" id="PF03063">
    <property type="entry name" value="Prismane"/>
    <property type="match status" value="1"/>
</dbReference>
<dbReference type="PIRSF" id="PIRSF000076">
    <property type="entry name" value="HCP"/>
    <property type="match status" value="1"/>
</dbReference>
<dbReference type="SUPFAM" id="SSF56821">
    <property type="entry name" value="Prismane protein-like"/>
    <property type="match status" value="1"/>
</dbReference>